<dbReference type="EMBL" id="CP000802">
    <property type="protein sequence ID" value="ABV06994.1"/>
    <property type="molecule type" value="Genomic_DNA"/>
</dbReference>
<dbReference type="RefSeq" id="WP_000189207.1">
    <property type="nucleotide sequence ID" value="NC_009800.1"/>
</dbReference>
<dbReference type="GeneID" id="93774508"/>
<dbReference type="KEGG" id="ecx:EcHS_A2735"/>
<dbReference type="HOGENOM" id="CLU_079569_1_2_6"/>
<dbReference type="GO" id="GO:0005886">
    <property type="term" value="C:plasma membrane"/>
    <property type="evidence" value="ECO:0007669"/>
    <property type="project" value="UniProtKB-SubCell"/>
</dbReference>
<dbReference type="GO" id="GO:0015171">
    <property type="term" value="F:amino acid transmembrane transporter activity"/>
    <property type="evidence" value="ECO:0007669"/>
    <property type="project" value="TreeGrafter"/>
</dbReference>
<dbReference type="GO" id="GO:0033228">
    <property type="term" value="P:cysteine export across plasma membrane"/>
    <property type="evidence" value="ECO:0007669"/>
    <property type="project" value="TreeGrafter"/>
</dbReference>
<dbReference type="InterPro" id="IPR001123">
    <property type="entry name" value="LeuE-type"/>
</dbReference>
<dbReference type="NCBIfam" id="NF007653">
    <property type="entry name" value="PRK10323.1"/>
    <property type="match status" value="1"/>
</dbReference>
<dbReference type="PANTHER" id="PTHR30086">
    <property type="entry name" value="ARGININE EXPORTER PROTEIN ARGO"/>
    <property type="match status" value="1"/>
</dbReference>
<dbReference type="PANTHER" id="PTHR30086:SF20">
    <property type="entry name" value="ARGININE EXPORTER PROTEIN ARGO-RELATED"/>
    <property type="match status" value="1"/>
</dbReference>
<dbReference type="Pfam" id="PF01810">
    <property type="entry name" value="LysE"/>
    <property type="match status" value="1"/>
</dbReference>
<reference key="1">
    <citation type="journal article" date="2008" name="J. Bacteriol.">
        <title>The pangenome structure of Escherichia coli: comparative genomic analysis of E. coli commensal and pathogenic isolates.</title>
        <authorList>
            <person name="Rasko D.A."/>
            <person name="Rosovitz M.J."/>
            <person name="Myers G.S.A."/>
            <person name="Mongodin E.F."/>
            <person name="Fricke W.F."/>
            <person name="Gajer P."/>
            <person name="Crabtree J."/>
            <person name="Sebaihia M."/>
            <person name="Thomson N.R."/>
            <person name="Chaudhuri R."/>
            <person name="Henderson I.R."/>
            <person name="Sperandio V."/>
            <person name="Ravel J."/>
        </authorList>
    </citation>
    <scope>NUCLEOTIDE SEQUENCE [LARGE SCALE GENOMIC DNA]</scope>
    <source>
        <strain>HS</strain>
    </source>
</reference>
<protein>
    <recommendedName>
        <fullName evidence="1">Cysteine/O-acetylserine efflux protein</fullName>
    </recommendedName>
</protein>
<gene>
    <name type="primary">eamB</name>
    <name type="ordered locus">EcHS_A2735</name>
</gene>
<organism>
    <name type="scientific">Escherichia coli O9:H4 (strain HS)</name>
    <dbReference type="NCBI Taxonomy" id="331112"/>
    <lineage>
        <taxon>Bacteria</taxon>
        <taxon>Pseudomonadati</taxon>
        <taxon>Pseudomonadota</taxon>
        <taxon>Gammaproteobacteria</taxon>
        <taxon>Enterobacterales</taxon>
        <taxon>Enterobacteriaceae</taxon>
        <taxon>Escherichia</taxon>
    </lineage>
</organism>
<name>EAMB_ECOHS</name>
<proteinExistence type="inferred from homology"/>
<keyword id="KW-0029">Amino-acid transport</keyword>
<keyword id="KW-0997">Cell inner membrane</keyword>
<keyword id="KW-1003">Cell membrane</keyword>
<keyword id="KW-0472">Membrane</keyword>
<keyword id="KW-0812">Transmembrane</keyword>
<keyword id="KW-1133">Transmembrane helix</keyword>
<keyword id="KW-0813">Transport</keyword>
<accession>A8A390</accession>
<evidence type="ECO:0000250" key="1">
    <source>
        <dbReference type="UniProtKB" id="P38101"/>
    </source>
</evidence>
<evidence type="ECO:0000255" key="2"/>
<evidence type="ECO:0000305" key="3"/>
<comment type="function">
    <text evidence="1">Exporter of O-acetylserine (OAS) and cysteine.</text>
</comment>
<comment type="catalytic activity">
    <reaction evidence="1">
        <text>O-acetyl-L-serine(in) = O-acetyl-L-serine(out)</text>
        <dbReference type="Rhea" id="RHEA:29659"/>
        <dbReference type="ChEBI" id="CHEBI:58340"/>
    </reaction>
    <physiologicalReaction direction="left-to-right" evidence="1">
        <dbReference type="Rhea" id="RHEA:29660"/>
    </physiologicalReaction>
</comment>
<comment type="catalytic activity">
    <reaction evidence="1">
        <text>L-cysteine(in) = L-cysteine(out)</text>
        <dbReference type="Rhea" id="RHEA:29655"/>
        <dbReference type="ChEBI" id="CHEBI:35235"/>
    </reaction>
    <physiologicalReaction direction="left-to-right" evidence="1">
        <dbReference type="Rhea" id="RHEA:29656"/>
    </physiologicalReaction>
</comment>
<comment type="subcellular location">
    <subcellularLocation>
        <location evidence="1">Cell inner membrane</location>
        <topology evidence="2">Multi-pass membrane protein</topology>
    </subcellularLocation>
</comment>
<comment type="similarity">
    <text evidence="3">Belongs to the Rht family.</text>
</comment>
<feature type="chain" id="PRO_0000318726" description="Cysteine/O-acetylserine efflux protein">
    <location>
        <begin position="1"/>
        <end position="195"/>
    </location>
</feature>
<feature type="topological domain" description="Periplasmic" evidence="2">
    <location>
        <begin position="1"/>
        <end position="7"/>
    </location>
</feature>
<feature type="transmembrane region" description="Helical" evidence="2">
    <location>
        <begin position="8"/>
        <end position="28"/>
    </location>
</feature>
<feature type="topological domain" description="Cytoplasmic" evidence="2">
    <location>
        <begin position="29"/>
        <end position="46"/>
    </location>
</feature>
<feature type="transmembrane region" description="Helical" evidence="2">
    <location>
        <begin position="47"/>
        <end position="67"/>
    </location>
</feature>
<feature type="topological domain" description="Periplasmic" evidence="2">
    <location>
        <begin position="68"/>
        <end position="69"/>
    </location>
</feature>
<feature type="transmembrane region" description="Helical" evidence="2">
    <location>
        <begin position="70"/>
        <end position="90"/>
    </location>
</feature>
<feature type="topological domain" description="Cytoplasmic" evidence="2">
    <location>
        <begin position="91"/>
        <end position="104"/>
    </location>
</feature>
<feature type="transmembrane region" description="Helical" evidence="2">
    <location>
        <begin position="105"/>
        <end position="125"/>
    </location>
</feature>
<feature type="topological domain" description="Periplasmic" evidence="2">
    <location>
        <begin position="126"/>
        <end position="141"/>
    </location>
</feature>
<feature type="transmembrane region" description="Helical" evidence="2">
    <location>
        <begin position="142"/>
        <end position="162"/>
    </location>
</feature>
<feature type="topological domain" description="Cytoplasmic" evidence="2">
    <location>
        <begin position="163"/>
        <end position="176"/>
    </location>
</feature>
<feature type="transmembrane region" description="Helical" evidence="2">
    <location>
        <begin position="177"/>
        <end position="194"/>
    </location>
</feature>
<feature type="topological domain" description="Periplasmic" evidence="1">
    <location>
        <position position="195"/>
    </location>
</feature>
<sequence length="195" mass="21248">MTPTLLSAFWTYTLITAMTPGPNNILALSSATSHGFRQSTRVLAGMSLGFLIVMLLCAGISFSLAVIDPAAVHLLSWAGAAYIVWLAWKIATSPTKEDGLQAKPISFWASFALQFVNVKIILYGVTALSTFVLPQTQALSWVVGVSVLLAMIGTFGNVCWALAGHLFQRLFRQYGRQLNIVLALLLVYCAVRIFY</sequence>